<reference key="1">
    <citation type="journal article" date="2008" name="Antimicrob. Agents Chemother.">
        <title>Mutated response regulator graR is responsible for phenotypic conversion of Staphylococcus aureus from heterogeneous vancomycin-intermediate resistance to vancomycin-intermediate resistance.</title>
        <authorList>
            <person name="Neoh H.-M."/>
            <person name="Cui L."/>
            <person name="Yuzawa H."/>
            <person name="Takeuchi F."/>
            <person name="Matsuo M."/>
            <person name="Hiramatsu K."/>
        </authorList>
    </citation>
    <scope>NUCLEOTIDE SEQUENCE [LARGE SCALE GENOMIC DNA]</scope>
    <source>
        <strain>Mu3 / ATCC 700698</strain>
    </source>
</reference>
<protein>
    <recommendedName>
        <fullName evidence="1">Coenzyme A disulfide reductase</fullName>
        <shortName evidence="1">CoA-disulfide reductase</shortName>
        <shortName evidence="1">CoADR</shortName>
        <ecNumber evidence="1">1.8.1.14</ecNumber>
    </recommendedName>
</protein>
<proteinExistence type="inferred from homology"/>
<organism>
    <name type="scientific">Staphylococcus aureus (strain Mu3 / ATCC 700698)</name>
    <dbReference type="NCBI Taxonomy" id="418127"/>
    <lineage>
        <taxon>Bacteria</taxon>
        <taxon>Bacillati</taxon>
        <taxon>Bacillota</taxon>
        <taxon>Bacilli</taxon>
        <taxon>Bacillales</taxon>
        <taxon>Staphylococcaceae</taxon>
        <taxon>Staphylococcus</taxon>
    </lineage>
</organism>
<name>CDR_STAA1</name>
<gene>
    <name evidence="1" type="primary">cdr</name>
    <name type="ordered locus">SAHV_0965</name>
</gene>
<keyword id="KW-0274">FAD</keyword>
<keyword id="KW-0285">Flavoprotein</keyword>
<keyword id="KW-0521">NADP</keyword>
<keyword id="KW-0560">Oxidoreductase</keyword>
<keyword id="KW-0676">Redox-active center</keyword>
<feature type="chain" id="PRO_1000069425" description="Coenzyme A disulfide reductase">
    <location>
        <begin position="1"/>
        <end position="438"/>
    </location>
</feature>
<feature type="active site" description="Nucleophile" evidence="1">
    <location>
        <position position="43"/>
    </location>
</feature>
<feature type="active site" description="Redox-active" evidence="1">
    <location>
        <position position="43"/>
    </location>
</feature>
<feature type="binding site" evidence="1">
    <location>
        <begin position="8"/>
        <end position="33"/>
    </location>
    <ligand>
        <name>FAD</name>
        <dbReference type="ChEBI" id="CHEBI:57692"/>
    </ligand>
</feature>
<feature type="binding site" evidence="1">
    <location>
        <position position="15"/>
    </location>
    <ligand>
        <name>substrate</name>
    </ligand>
</feature>
<feature type="binding site" evidence="1">
    <location>
        <position position="19"/>
    </location>
    <ligand>
        <name>substrate</name>
    </ligand>
</feature>
<feature type="binding site" evidence="1">
    <location>
        <position position="22"/>
    </location>
    <ligand>
        <name>substrate</name>
    </ligand>
</feature>
<feature type="binding site" evidence="1">
    <location>
        <position position="39"/>
    </location>
    <ligand>
        <name>substrate</name>
    </ligand>
</feature>
<feature type="binding site" evidence="1">
    <location>
        <position position="42"/>
    </location>
    <ligand>
        <name>substrate</name>
    </ligand>
</feature>
<feature type="binding site" evidence="1">
    <location>
        <position position="71"/>
    </location>
    <ligand>
        <name>substrate</name>
    </ligand>
</feature>
<feature type="binding site" evidence="1">
    <location>
        <begin position="151"/>
        <end position="166"/>
    </location>
    <ligand>
        <name>NADP(+)</name>
        <dbReference type="ChEBI" id="CHEBI:58349"/>
    </ligand>
</feature>
<feature type="binding site" evidence="1">
    <location>
        <begin position="267"/>
        <end position="277"/>
    </location>
    <ligand>
        <name>FAD</name>
        <dbReference type="ChEBI" id="CHEBI:57692"/>
    </ligand>
</feature>
<feature type="binding site" evidence="1">
    <location>
        <position position="299"/>
    </location>
    <ligand>
        <name>substrate</name>
    </ligand>
</feature>
<feature type="binding site" evidence="1">
    <location>
        <position position="419"/>
    </location>
    <ligand>
        <name>FAD</name>
        <dbReference type="ChEBI" id="CHEBI:57692"/>
    </ligand>
</feature>
<feature type="binding site" evidence="1">
    <location>
        <position position="427"/>
    </location>
    <ligand>
        <name>substrate</name>
    </ligand>
</feature>
<accession>A7X0I7</accession>
<evidence type="ECO:0000255" key="1">
    <source>
        <dbReference type="HAMAP-Rule" id="MF_01608"/>
    </source>
</evidence>
<sequence length="438" mass="49291">MPKIVVVGAVAGGATCASQIRRLDKESDIIIFEKDRDMSFANCALPYVIGEVVEDRKYALAYTPEKFYDRKQITVKTYHEVIAINDERQTVTVLNRKTNEQFEESYDKLILSPGASANSLGFESDITFTLRNLEDTDAIDQFIKANQVDKVLVIGAGYVSLEVLENLYERGLHPTLIHRSDKINKLMDADMNQPILDELDKREIPYRLNEEIDAINGNEITFKSGKVEHYDMIIEGVGTHPNSKFIESSNIKLDRKGFIPVNDKFETNVPNIYAIGDIATSHYRHVDLPASVPLAWGAHRAASIVAEQIAGNDTIEFKGFLGNNIVKFFDYTFASVGVKPNELKQFDYKMVEVTQGAHANYYPGNSPLHLRVYYDTSNRQILRAAAVGKEGADKRIDVLSMAMMNQLTVDELTEFEVAYAPPYSHPKDLINMIGYKAK</sequence>
<dbReference type="EC" id="1.8.1.14" evidence="1"/>
<dbReference type="EMBL" id="AP009324">
    <property type="protein sequence ID" value="BAF77848.1"/>
    <property type="molecule type" value="Genomic_DNA"/>
</dbReference>
<dbReference type="RefSeq" id="WP_001124506.1">
    <property type="nucleotide sequence ID" value="NC_009782.1"/>
</dbReference>
<dbReference type="SMR" id="A7X0I7"/>
<dbReference type="KEGG" id="saw:SAHV_0965"/>
<dbReference type="HOGENOM" id="CLU_003291_1_3_9"/>
<dbReference type="GO" id="GO:0050451">
    <property type="term" value="F:CoA-disulfide reductase (NADPH) activity"/>
    <property type="evidence" value="ECO:0007669"/>
    <property type="project" value="UniProtKB-UniRule"/>
</dbReference>
<dbReference type="GO" id="GO:0050660">
    <property type="term" value="F:flavin adenine dinucleotide binding"/>
    <property type="evidence" value="ECO:0007669"/>
    <property type="project" value="UniProtKB-UniRule"/>
</dbReference>
<dbReference type="GO" id="GO:0050661">
    <property type="term" value="F:NADP binding"/>
    <property type="evidence" value="ECO:0007669"/>
    <property type="project" value="UniProtKB-UniRule"/>
</dbReference>
<dbReference type="GO" id="GO:0003756">
    <property type="term" value="F:protein disulfide isomerase activity"/>
    <property type="evidence" value="ECO:0007669"/>
    <property type="project" value="UniProtKB-UniRule"/>
</dbReference>
<dbReference type="Gene3D" id="3.30.390.30">
    <property type="match status" value="1"/>
</dbReference>
<dbReference type="Gene3D" id="3.50.50.60">
    <property type="entry name" value="FAD/NAD(P)-binding domain"/>
    <property type="match status" value="2"/>
</dbReference>
<dbReference type="HAMAP" id="MF_01608">
    <property type="entry name" value="CoA_diS_reduct"/>
    <property type="match status" value="1"/>
</dbReference>
<dbReference type="InterPro" id="IPR017758">
    <property type="entry name" value="CoA_disulphide_reductase"/>
</dbReference>
<dbReference type="InterPro" id="IPR023536">
    <property type="entry name" value="CoA_disulphide_reductase_staph"/>
</dbReference>
<dbReference type="InterPro" id="IPR050260">
    <property type="entry name" value="FAD-bd_OxRdtase"/>
</dbReference>
<dbReference type="InterPro" id="IPR036188">
    <property type="entry name" value="FAD/NAD-bd_sf"/>
</dbReference>
<dbReference type="InterPro" id="IPR023753">
    <property type="entry name" value="FAD/NAD-binding_dom"/>
</dbReference>
<dbReference type="InterPro" id="IPR016156">
    <property type="entry name" value="FAD/NAD-linked_Rdtase_dimer_sf"/>
</dbReference>
<dbReference type="InterPro" id="IPR004099">
    <property type="entry name" value="Pyr_nucl-diS_OxRdtase_dimer"/>
</dbReference>
<dbReference type="NCBIfam" id="TIGR03385">
    <property type="entry name" value="CoA_CoA_reduc"/>
    <property type="match status" value="1"/>
</dbReference>
<dbReference type="NCBIfam" id="NF010037">
    <property type="entry name" value="PRK13512.1"/>
    <property type="match status" value="1"/>
</dbReference>
<dbReference type="PANTHER" id="PTHR43429:SF1">
    <property type="entry name" value="NAD(P)H SULFUR OXIDOREDUCTASE (COA-DEPENDENT)"/>
    <property type="match status" value="1"/>
</dbReference>
<dbReference type="PANTHER" id="PTHR43429">
    <property type="entry name" value="PYRIDINE NUCLEOTIDE-DISULFIDE OXIDOREDUCTASE DOMAIN-CONTAINING"/>
    <property type="match status" value="1"/>
</dbReference>
<dbReference type="Pfam" id="PF07992">
    <property type="entry name" value="Pyr_redox_2"/>
    <property type="match status" value="1"/>
</dbReference>
<dbReference type="Pfam" id="PF02852">
    <property type="entry name" value="Pyr_redox_dim"/>
    <property type="match status" value="1"/>
</dbReference>
<dbReference type="PRINTS" id="PR00368">
    <property type="entry name" value="FADPNR"/>
</dbReference>
<dbReference type="PRINTS" id="PR00411">
    <property type="entry name" value="PNDRDTASEI"/>
</dbReference>
<dbReference type="SUPFAM" id="SSF51905">
    <property type="entry name" value="FAD/NAD(P)-binding domain"/>
    <property type="match status" value="1"/>
</dbReference>
<dbReference type="SUPFAM" id="SSF55424">
    <property type="entry name" value="FAD/NAD-linked reductases, dimerisation (C-terminal) domain"/>
    <property type="match status" value="1"/>
</dbReference>
<comment type="function">
    <text evidence="1">Catalyzes specifically the NADPH-dependent reduction of coenzyme A disulfide.</text>
</comment>
<comment type="catalytic activity">
    <reaction evidence="1">
        <text>NADP(+) + 2 CoA = CoA-disulfide + NADPH + H(+)</text>
        <dbReference type="Rhea" id="RHEA:14705"/>
        <dbReference type="ChEBI" id="CHEBI:15378"/>
        <dbReference type="ChEBI" id="CHEBI:57287"/>
        <dbReference type="ChEBI" id="CHEBI:57783"/>
        <dbReference type="ChEBI" id="CHEBI:58349"/>
        <dbReference type="ChEBI" id="CHEBI:62209"/>
        <dbReference type="EC" id="1.8.1.14"/>
    </reaction>
</comment>
<comment type="cofactor">
    <cofactor evidence="1">
        <name>FAD</name>
        <dbReference type="ChEBI" id="CHEBI:57692"/>
    </cofactor>
    <text evidence="1">Binds 1 FAD per subunit.</text>
</comment>
<comment type="subunit">
    <text evidence="1">Homodimer.</text>
</comment>
<comment type="domain">
    <text evidence="1">Contains 2 FAD binding domains and a single NADPH binding domain.</text>
</comment>
<comment type="miscellaneous">
    <text evidence="1">Reduction of disulfides occurs by a thiol-disulfide exchange reaction, but involves only a single catalytic cysteine residue that forms a stable mixed disulfide with CoA during catalysis.</text>
</comment>
<comment type="similarity">
    <text evidence="1">Belongs to the class-III pyridine nucleotide-disulfide oxidoreductase family.</text>
</comment>